<reference key="1">
    <citation type="journal article" date="2005" name="Nature">
        <title>The genome sequence of the rice blast fungus Magnaporthe grisea.</title>
        <authorList>
            <person name="Dean R.A."/>
            <person name="Talbot N.J."/>
            <person name="Ebbole D.J."/>
            <person name="Farman M.L."/>
            <person name="Mitchell T.K."/>
            <person name="Orbach M.J."/>
            <person name="Thon M.R."/>
            <person name="Kulkarni R."/>
            <person name="Xu J.-R."/>
            <person name="Pan H."/>
            <person name="Read N.D."/>
            <person name="Lee Y.-H."/>
            <person name="Carbone I."/>
            <person name="Brown D."/>
            <person name="Oh Y.Y."/>
            <person name="Donofrio N."/>
            <person name="Jeong J.S."/>
            <person name="Soanes D.M."/>
            <person name="Djonovic S."/>
            <person name="Kolomiets E."/>
            <person name="Rehmeyer C."/>
            <person name="Li W."/>
            <person name="Harding M."/>
            <person name="Kim S."/>
            <person name="Lebrun M.-H."/>
            <person name="Bohnert H."/>
            <person name="Coughlan S."/>
            <person name="Butler J."/>
            <person name="Calvo S.E."/>
            <person name="Ma L.-J."/>
            <person name="Nicol R."/>
            <person name="Purcell S."/>
            <person name="Nusbaum C."/>
            <person name="Galagan J.E."/>
            <person name="Birren B.W."/>
        </authorList>
    </citation>
    <scope>NUCLEOTIDE SEQUENCE [LARGE SCALE GENOMIC DNA]</scope>
    <source>
        <strain>70-15 / ATCC MYA-4617 / FGSC 8958</strain>
    </source>
</reference>
<gene>
    <name type="primary">RTC5</name>
    <name type="ORF">MGG_07277</name>
</gene>
<keyword id="KW-0963">Cytoplasm</keyword>
<keyword id="KW-1185">Reference proteome</keyword>
<evidence type="ECO:0000250" key="1"/>
<evidence type="ECO:0000255" key="2">
    <source>
        <dbReference type="PROSITE-ProRule" id="PRU01234"/>
    </source>
</evidence>
<evidence type="ECO:0000256" key="3">
    <source>
        <dbReference type="SAM" id="MobiDB-lite"/>
    </source>
</evidence>
<evidence type="ECO:0000305" key="4"/>
<accession>A4RI88</accession>
<accession>G4MUK3</accession>
<sequence length="629" mass="68791">MGQDHSVEARPPPTHEEVVRHLAGKFADKCYTPLEIYSLKDNFKSLADTVQDVKYLKEDTVARFLEIPDALRVTPVLFQSVSFLAAFPFLRDAPAVLGLEQLVIAITILTGRWKRVLKSPADRTKLLFKSLAVYDRKLSCATLTPVASPMAAEAKGASAGFAVDEAGDDDEAEDDGDDDLVLAAFESLDCVDAFRHGDAPPKIQGAMIPADNFVRLIMLLLLVAPLDPQERLSQYSDRLVGTELEDLHATAQCVVQAFLDVEEVPGLTWSRFRKILPVCCPFMFDAGFNALFSHFLFSKNIDFNKRKPTGSEEDRGEQPKLPQKATPSQSTLPQPLLPQAGSILNANILSQLSFFIPGDSLFRCLRLLYSGDEDGFSMGSFESKVFNWRAPTLLLVRGRRLDDHPDGTRESAFAASIPPRRFPNGGGGGTTENSDEIITFGAFIAQPWRHTHRECFGDDSSVLFQLGPVHDVFRASTMNRDYAGFVKPTGSGSSNHHGGIMFGCPAPSPSKASSATGALVALGSVSLFLDSSFEFGVFTHDHTSRGGAYAGSTSRPRNFQERFAVNCLEVWGCGGDEESKRQAERWAWEAREAEARRKINLGTGDLEADRALLEMAGLVGQNRSGGSMI</sequence>
<dbReference type="EMBL" id="CM001232">
    <property type="protein sequence ID" value="EHA55695.1"/>
    <property type="molecule type" value="Genomic_DNA"/>
</dbReference>
<dbReference type="RefSeq" id="XP_003715502.1">
    <property type="nucleotide sequence ID" value="XM_003715454.1"/>
</dbReference>
<dbReference type="SMR" id="A4RI88"/>
<dbReference type="STRING" id="242507.A4RI88"/>
<dbReference type="EnsemblFungi" id="MGG_07277T0">
    <property type="protein sequence ID" value="MGG_07277T0"/>
    <property type="gene ID" value="MGG_07277"/>
</dbReference>
<dbReference type="GeneID" id="2683023"/>
<dbReference type="KEGG" id="mgr:MGG_07277"/>
<dbReference type="VEuPathDB" id="FungiDB:MGG_07277"/>
<dbReference type="eggNOG" id="ENOG502QV3R">
    <property type="taxonomic scope" value="Eukaryota"/>
</dbReference>
<dbReference type="HOGENOM" id="CLU_011918_1_0_1"/>
<dbReference type="InParanoid" id="A4RI88"/>
<dbReference type="OMA" id="KWEFEAR"/>
<dbReference type="OrthoDB" id="289228at2759"/>
<dbReference type="Proteomes" id="UP000009058">
    <property type="component" value="Chromosome 2"/>
</dbReference>
<dbReference type="GO" id="GO:0005737">
    <property type="term" value="C:cytoplasm"/>
    <property type="evidence" value="ECO:0007669"/>
    <property type="project" value="UniProtKB-SubCell"/>
</dbReference>
<dbReference type="GO" id="GO:0005634">
    <property type="term" value="C:nucleus"/>
    <property type="evidence" value="ECO:0007669"/>
    <property type="project" value="TreeGrafter"/>
</dbReference>
<dbReference type="GO" id="GO:0006979">
    <property type="term" value="P:response to oxidative stress"/>
    <property type="evidence" value="ECO:0007669"/>
    <property type="project" value="TreeGrafter"/>
</dbReference>
<dbReference type="InterPro" id="IPR006571">
    <property type="entry name" value="TLDc_dom"/>
</dbReference>
<dbReference type="PANTHER" id="PTHR23354">
    <property type="entry name" value="NUCLEOLAR PROTEIN 7/ESTROGEN RECEPTOR COACTIVATOR-RELATED"/>
    <property type="match status" value="1"/>
</dbReference>
<dbReference type="PANTHER" id="PTHR23354:SF130">
    <property type="entry name" value="RESTRICTION OF TELOMERE CAPPING PROTEIN 5"/>
    <property type="match status" value="1"/>
</dbReference>
<dbReference type="Pfam" id="PF07534">
    <property type="entry name" value="TLD"/>
    <property type="match status" value="1"/>
</dbReference>
<dbReference type="SMART" id="SM00584">
    <property type="entry name" value="TLDc"/>
    <property type="match status" value="1"/>
</dbReference>
<dbReference type="PROSITE" id="PS51886">
    <property type="entry name" value="TLDC"/>
    <property type="match status" value="1"/>
</dbReference>
<name>RTC5_PYRO7</name>
<protein>
    <recommendedName>
        <fullName>Restriction of telomere capping protein 5</fullName>
    </recommendedName>
</protein>
<organism>
    <name type="scientific">Pyricularia oryzae (strain 70-15 / ATCC MYA-4617 / FGSC 8958)</name>
    <name type="common">Rice blast fungus</name>
    <name type="synonym">Magnaporthe oryzae</name>
    <dbReference type="NCBI Taxonomy" id="242507"/>
    <lineage>
        <taxon>Eukaryota</taxon>
        <taxon>Fungi</taxon>
        <taxon>Dikarya</taxon>
        <taxon>Ascomycota</taxon>
        <taxon>Pezizomycotina</taxon>
        <taxon>Sordariomycetes</taxon>
        <taxon>Sordariomycetidae</taxon>
        <taxon>Magnaporthales</taxon>
        <taxon>Pyriculariaceae</taxon>
        <taxon>Pyricularia</taxon>
    </lineage>
</organism>
<feature type="chain" id="PRO_0000408830" description="Restriction of telomere capping protein 5">
    <location>
        <begin position="1"/>
        <end position="629"/>
    </location>
</feature>
<feature type="domain" description="TLDc" evidence="2">
    <location>
        <begin position="342"/>
        <end position="574"/>
    </location>
</feature>
<feature type="region of interest" description="Disordered" evidence="3">
    <location>
        <begin position="307"/>
        <end position="336"/>
    </location>
</feature>
<feature type="region of interest" description="Disordered" evidence="3">
    <location>
        <begin position="406"/>
        <end position="431"/>
    </location>
</feature>
<feature type="compositionally biased region" description="Basic and acidic residues" evidence="3">
    <location>
        <begin position="307"/>
        <end position="318"/>
    </location>
</feature>
<feature type="compositionally biased region" description="Low complexity" evidence="3">
    <location>
        <begin position="326"/>
        <end position="336"/>
    </location>
</feature>
<proteinExistence type="inferred from homology"/>
<comment type="function">
    <text evidence="1">May be involved in a process influencing telomere capping.</text>
</comment>
<comment type="subcellular location">
    <subcellularLocation>
        <location evidence="1">Cytoplasm</location>
    </subcellularLocation>
</comment>
<comment type="similarity">
    <text evidence="4">Belongs to the RTC5 family.</text>
</comment>